<sequence>MPAGGLIVAIDGPSGTGKSTTSRALATRLSAKYLDTGAMYRVATLHVLNQGIDPADSAAVIAATAVLPLSISDDPASTEVLLAGVDVQKDIRGPEVTQNVSAVSAIPEVRENLVALQRALAAKAHRCVVEGRDIGTAVLVDAPIKAFLTASAEVRAQRRFDQDTAAGRDVDFDAVLADVVRRDELDSTRAASPLKPADDAHIVDTSDMTMDQVLDHLIHLVEASAERSNQ</sequence>
<comment type="catalytic activity">
    <reaction evidence="1">
        <text>CMP + ATP = CDP + ADP</text>
        <dbReference type="Rhea" id="RHEA:11600"/>
        <dbReference type="ChEBI" id="CHEBI:30616"/>
        <dbReference type="ChEBI" id="CHEBI:58069"/>
        <dbReference type="ChEBI" id="CHEBI:60377"/>
        <dbReference type="ChEBI" id="CHEBI:456216"/>
        <dbReference type="EC" id="2.7.4.25"/>
    </reaction>
</comment>
<comment type="catalytic activity">
    <reaction evidence="1">
        <text>dCMP + ATP = dCDP + ADP</text>
        <dbReference type="Rhea" id="RHEA:25094"/>
        <dbReference type="ChEBI" id="CHEBI:30616"/>
        <dbReference type="ChEBI" id="CHEBI:57566"/>
        <dbReference type="ChEBI" id="CHEBI:58593"/>
        <dbReference type="ChEBI" id="CHEBI:456216"/>
        <dbReference type="EC" id="2.7.4.25"/>
    </reaction>
</comment>
<comment type="subcellular location">
    <subcellularLocation>
        <location evidence="1">Cytoplasm</location>
    </subcellularLocation>
</comment>
<comment type="similarity">
    <text evidence="1">Belongs to the cytidylate kinase family. Type 1 subfamily.</text>
</comment>
<comment type="sequence caution" evidence="2">
    <conflict type="erroneous initiation">
        <sequence resource="EMBL-CDS" id="CAF21437"/>
    </conflict>
</comment>
<accession>Q8NQK7</accession>
<keyword id="KW-0067">ATP-binding</keyword>
<keyword id="KW-0963">Cytoplasm</keyword>
<keyword id="KW-0418">Kinase</keyword>
<keyword id="KW-0547">Nucleotide-binding</keyword>
<keyword id="KW-1185">Reference proteome</keyword>
<keyword id="KW-0808">Transferase</keyword>
<dbReference type="EC" id="2.7.4.25" evidence="1"/>
<dbReference type="EMBL" id="BA000036">
    <property type="protein sequence ID" value="BAB98820.1"/>
    <property type="molecule type" value="Genomic_DNA"/>
</dbReference>
<dbReference type="EMBL" id="BX927152">
    <property type="protein sequence ID" value="CAF21437.1"/>
    <property type="status" value="ALT_INIT"/>
    <property type="molecule type" value="Genomic_DNA"/>
</dbReference>
<dbReference type="RefSeq" id="NP_600645.1">
    <property type="nucleotide sequence ID" value="NC_003450.3"/>
</dbReference>
<dbReference type="SMR" id="Q8NQK7"/>
<dbReference type="STRING" id="196627.cg1616"/>
<dbReference type="KEGG" id="cgb:cg1616"/>
<dbReference type="KEGG" id="cgl:Cgl1427"/>
<dbReference type="PATRIC" id="fig|196627.13.peg.1395"/>
<dbReference type="eggNOG" id="COG0283">
    <property type="taxonomic scope" value="Bacteria"/>
</dbReference>
<dbReference type="HOGENOM" id="CLU_079959_0_0_11"/>
<dbReference type="OrthoDB" id="9807434at2"/>
<dbReference type="BioCyc" id="CORYNE:G18NG-11009-MONOMER"/>
<dbReference type="Proteomes" id="UP000000582">
    <property type="component" value="Chromosome"/>
</dbReference>
<dbReference type="Proteomes" id="UP000001009">
    <property type="component" value="Chromosome"/>
</dbReference>
<dbReference type="GO" id="GO:0005829">
    <property type="term" value="C:cytosol"/>
    <property type="evidence" value="ECO:0007669"/>
    <property type="project" value="TreeGrafter"/>
</dbReference>
<dbReference type="GO" id="GO:0005524">
    <property type="term" value="F:ATP binding"/>
    <property type="evidence" value="ECO:0007669"/>
    <property type="project" value="UniProtKB-UniRule"/>
</dbReference>
<dbReference type="GO" id="GO:0036430">
    <property type="term" value="F:CMP kinase activity"/>
    <property type="evidence" value="ECO:0007669"/>
    <property type="project" value="RHEA"/>
</dbReference>
<dbReference type="GO" id="GO:0036431">
    <property type="term" value="F:dCMP kinase activity"/>
    <property type="evidence" value="ECO:0007669"/>
    <property type="project" value="RHEA"/>
</dbReference>
<dbReference type="GO" id="GO:0015949">
    <property type="term" value="P:nucleobase-containing small molecule interconversion"/>
    <property type="evidence" value="ECO:0007669"/>
    <property type="project" value="TreeGrafter"/>
</dbReference>
<dbReference type="GO" id="GO:0006220">
    <property type="term" value="P:pyrimidine nucleotide metabolic process"/>
    <property type="evidence" value="ECO:0007669"/>
    <property type="project" value="UniProtKB-UniRule"/>
</dbReference>
<dbReference type="CDD" id="cd02020">
    <property type="entry name" value="CMPK"/>
    <property type="match status" value="1"/>
</dbReference>
<dbReference type="Gene3D" id="3.40.50.300">
    <property type="entry name" value="P-loop containing nucleotide triphosphate hydrolases"/>
    <property type="match status" value="1"/>
</dbReference>
<dbReference type="HAMAP" id="MF_00238">
    <property type="entry name" value="Cytidyl_kinase_type1"/>
    <property type="match status" value="1"/>
</dbReference>
<dbReference type="InterPro" id="IPR003136">
    <property type="entry name" value="Cytidylate_kin"/>
</dbReference>
<dbReference type="InterPro" id="IPR011994">
    <property type="entry name" value="Cytidylate_kinase_dom"/>
</dbReference>
<dbReference type="InterPro" id="IPR027417">
    <property type="entry name" value="P-loop_NTPase"/>
</dbReference>
<dbReference type="NCBIfam" id="TIGR00017">
    <property type="entry name" value="cmk"/>
    <property type="match status" value="1"/>
</dbReference>
<dbReference type="PANTHER" id="PTHR21299:SF2">
    <property type="entry name" value="CYTIDYLATE KINASE"/>
    <property type="match status" value="1"/>
</dbReference>
<dbReference type="PANTHER" id="PTHR21299">
    <property type="entry name" value="CYTIDYLATE KINASE/PANTOATE-BETA-ALANINE LIGASE"/>
    <property type="match status" value="1"/>
</dbReference>
<dbReference type="Pfam" id="PF02224">
    <property type="entry name" value="Cytidylate_kin"/>
    <property type="match status" value="1"/>
</dbReference>
<dbReference type="SUPFAM" id="SSF52540">
    <property type="entry name" value="P-loop containing nucleoside triphosphate hydrolases"/>
    <property type="match status" value="1"/>
</dbReference>
<evidence type="ECO:0000255" key="1">
    <source>
        <dbReference type="HAMAP-Rule" id="MF_00238"/>
    </source>
</evidence>
<evidence type="ECO:0000305" key="2"/>
<reference key="1">
    <citation type="journal article" date="2003" name="Appl. Microbiol. Biotechnol.">
        <title>The Corynebacterium glutamicum genome: features and impacts on biotechnological processes.</title>
        <authorList>
            <person name="Ikeda M."/>
            <person name="Nakagawa S."/>
        </authorList>
    </citation>
    <scope>NUCLEOTIDE SEQUENCE [LARGE SCALE GENOMIC DNA]</scope>
    <source>
        <strain>ATCC 13032 / DSM 20300 / JCM 1318 / BCRC 11384 / CCUG 27702 / LMG 3730 / NBRC 12168 / NCIMB 10025 / NRRL B-2784 / 534</strain>
    </source>
</reference>
<reference key="2">
    <citation type="journal article" date="2003" name="J. Biotechnol.">
        <title>The complete Corynebacterium glutamicum ATCC 13032 genome sequence and its impact on the production of L-aspartate-derived amino acids and vitamins.</title>
        <authorList>
            <person name="Kalinowski J."/>
            <person name="Bathe B."/>
            <person name="Bartels D."/>
            <person name="Bischoff N."/>
            <person name="Bott M."/>
            <person name="Burkovski A."/>
            <person name="Dusch N."/>
            <person name="Eggeling L."/>
            <person name="Eikmanns B.J."/>
            <person name="Gaigalat L."/>
            <person name="Goesmann A."/>
            <person name="Hartmann M."/>
            <person name="Huthmacher K."/>
            <person name="Kraemer R."/>
            <person name="Linke B."/>
            <person name="McHardy A.C."/>
            <person name="Meyer F."/>
            <person name="Moeckel B."/>
            <person name="Pfefferle W."/>
            <person name="Puehler A."/>
            <person name="Rey D.A."/>
            <person name="Rueckert C."/>
            <person name="Rupp O."/>
            <person name="Sahm H."/>
            <person name="Wendisch V.F."/>
            <person name="Wiegraebe I."/>
            <person name="Tauch A."/>
        </authorList>
    </citation>
    <scope>NUCLEOTIDE SEQUENCE [LARGE SCALE GENOMIC DNA]</scope>
    <source>
        <strain>ATCC 13032 / DSM 20300 / JCM 1318 / BCRC 11384 / CCUG 27702 / LMG 3730 / NBRC 12168 / NCIMB 10025 / NRRL B-2784 / 534</strain>
    </source>
</reference>
<protein>
    <recommendedName>
        <fullName evidence="1">Cytidylate kinase</fullName>
        <shortName evidence="1">CK</shortName>
        <ecNumber evidence="1">2.7.4.25</ecNumber>
    </recommendedName>
    <alternativeName>
        <fullName evidence="1">Cytidine monophosphate kinase</fullName>
        <shortName evidence="1">CMP kinase</shortName>
    </alternativeName>
</protein>
<organism>
    <name type="scientific">Corynebacterium glutamicum (strain ATCC 13032 / DSM 20300 / JCM 1318 / BCRC 11384 / CCUG 27702 / LMG 3730 / NBRC 12168 / NCIMB 10025 / NRRL B-2784 / 534)</name>
    <dbReference type="NCBI Taxonomy" id="196627"/>
    <lineage>
        <taxon>Bacteria</taxon>
        <taxon>Bacillati</taxon>
        <taxon>Actinomycetota</taxon>
        <taxon>Actinomycetes</taxon>
        <taxon>Mycobacteriales</taxon>
        <taxon>Corynebacteriaceae</taxon>
        <taxon>Corynebacterium</taxon>
    </lineage>
</organism>
<proteinExistence type="inferred from homology"/>
<name>KCY_CORGL</name>
<feature type="chain" id="PRO_0000131909" description="Cytidylate kinase">
    <location>
        <begin position="1"/>
        <end position="230"/>
    </location>
</feature>
<feature type="binding site" evidence="1">
    <location>
        <begin position="12"/>
        <end position="20"/>
    </location>
    <ligand>
        <name>ATP</name>
        <dbReference type="ChEBI" id="CHEBI:30616"/>
    </ligand>
</feature>
<gene>
    <name evidence="1" type="primary">cmk</name>
    <name type="ordered locus">Cgl1427</name>
    <name type="ordered locus">cg1616</name>
</gene>